<name>Y3866_ARATH</name>
<evidence type="ECO:0000250" key="1"/>
<evidence type="ECO:0000250" key="2">
    <source>
        <dbReference type="UniProtKB" id="Q9FMF5"/>
    </source>
</evidence>
<evidence type="ECO:0000255" key="3">
    <source>
        <dbReference type="PROSITE-ProRule" id="PRU00037"/>
    </source>
</evidence>
<evidence type="ECO:0000255" key="4">
    <source>
        <dbReference type="PROSITE-ProRule" id="PRU00982"/>
    </source>
</evidence>
<evidence type="ECO:0000256" key="5">
    <source>
        <dbReference type="SAM" id="MobiDB-lite"/>
    </source>
</evidence>
<evidence type="ECO:0000269" key="6">
    <source>
    </source>
</evidence>
<feature type="chain" id="PRO_0000409574" description="Putative BTB/POZ domain-containing protein At3g08660">
    <location>
        <begin position="1"/>
        <end position="582"/>
    </location>
</feature>
<feature type="domain" description="BTB" evidence="3">
    <location>
        <begin position="36"/>
        <end position="103"/>
    </location>
</feature>
<feature type="domain" description="NPH3" evidence="4">
    <location>
        <begin position="196"/>
        <end position="466"/>
    </location>
</feature>
<feature type="region of interest" description="Disordered" evidence="5">
    <location>
        <begin position="1"/>
        <end position="21"/>
    </location>
</feature>
<feature type="region of interest" description="Disordered" evidence="5">
    <location>
        <begin position="558"/>
        <end position="582"/>
    </location>
</feature>
<feature type="compositionally biased region" description="Basic and acidic residues" evidence="5">
    <location>
        <begin position="571"/>
        <end position="582"/>
    </location>
</feature>
<feature type="modified residue" description="Phosphotyrosine" evidence="2">
    <location>
        <position position="407"/>
    </location>
</feature>
<keyword id="KW-0597">Phosphoprotein</keyword>
<keyword id="KW-1185">Reference proteome</keyword>
<keyword id="KW-0833">Ubl conjugation pathway</keyword>
<proteinExistence type="inferred from homology"/>
<accession>Q9C9Z0</accession>
<gene>
    <name type="ordered locus">At3g08660</name>
    <name type="ORF">F17O14.13</name>
</gene>
<sequence>MGSDSTLSLPSSSPPCNNRSSVPPTFTTRIFSDVAGDIIVVVDGESFLLHKFPLVARSGKMRKMVRDLKDSSSMIELRDFPGGPSTFELTMKFCYGINFDITAFNVVSLRCAAGYLEMTEDYKEQNLIFRAENYLDQIVFRSFHESVLVLCSCETQEIAETYEIPDRCVEAIAMNACRKQLVSGLSEELKGRDCLEMWTEELSALGIDYYVQVVSAMARLSVRSESIVASLVHYAKTSLKGIIDRNCQEQRKIVEAMVNLLPNDEKGSYSLSIIPLGFLFGMLKVGTIIDIEISCRLELERRIGHQLETASLDDLLIPSVQNEDSMYDVDTVHRILTFFLERIEEEDDECGYDSDSTGQHSSLLKVGRIMDAYLVEIAPDPYLSLHKFTAIIETLPEHSRIVDDGIYRAIDMYLKAHPLLTEEERKKLCNFIDCKKLSQEASNHVAQNDRLPVQMVVRVLYTEQLRLKKALSGDSEEGSWVLPSGVQSRAVSPRDTYAALRRENRELKLEISRMRVRVSELEKEHNLMKHEMMEKSGNNGGTFLTSLSKGIGRIATFGGETRQKVNRKSRSVSERKSSRSGR</sequence>
<protein>
    <recommendedName>
        <fullName>Putative BTB/POZ domain-containing protein At3g08660</fullName>
    </recommendedName>
</protein>
<reference key="1">
    <citation type="journal article" date="2000" name="Nature">
        <title>Sequence and analysis of chromosome 3 of the plant Arabidopsis thaliana.</title>
        <authorList>
            <person name="Salanoubat M."/>
            <person name="Lemcke K."/>
            <person name="Rieger M."/>
            <person name="Ansorge W."/>
            <person name="Unseld M."/>
            <person name="Fartmann B."/>
            <person name="Valle G."/>
            <person name="Bloecker H."/>
            <person name="Perez-Alonso M."/>
            <person name="Obermaier B."/>
            <person name="Delseny M."/>
            <person name="Boutry M."/>
            <person name="Grivell L.A."/>
            <person name="Mache R."/>
            <person name="Puigdomenech P."/>
            <person name="De Simone V."/>
            <person name="Choisne N."/>
            <person name="Artiguenave F."/>
            <person name="Robert C."/>
            <person name="Brottier P."/>
            <person name="Wincker P."/>
            <person name="Cattolico L."/>
            <person name="Weissenbach J."/>
            <person name="Saurin W."/>
            <person name="Quetier F."/>
            <person name="Schaefer M."/>
            <person name="Mueller-Auer S."/>
            <person name="Gabel C."/>
            <person name="Fuchs M."/>
            <person name="Benes V."/>
            <person name="Wurmbach E."/>
            <person name="Drzonek H."/>
            <person name="Erfle H."/>
            <person name="Jordan N."/>
            <person name="Bangert S."/>
            <person name="Wiedelmann R."/>
            <person name="Kranz H."/>
            <person name="Voss H."/>
            <person name="Holland R."/>
            <person name="Brandt P."/>
            <person name="Nyakatura G."/>
            <person name="Vezzi A."/>
            <person name="D'Angelo M."/>
            <person name="Pallavicini A."/>
            <person name="Toppo S."/>
            <person name="Simionati B."/>
            <person name="Conrad A."/>
            <person name="Hornischer K."/>
            <person name="Kauer G."/>
            <person name="Loehnert T.-H."/>
            <person name="Nordsiek G."/>
            <person name="Reichelt J."/>
            <person name="Scharfe M."/>
            <person name="Schoen O."/>
            <person name="Bargues M."/>
            <person name="Terol J."/>
            <person name="Climent J."/>
            <person name="Navarro P."/>
            <person name="Collado C."/>
            <person name="Perez-Perez A."/>
            <person name="Ottenwaelder B."/>
            <person name="Duchemin D."/>
            <person name="Cooke R."/>
            <person name="Laudie M."/>
            <person name="Berger-Llauro C."/>
            <person name="Purnelle B."/>
            <person name="Masuy D."/>
            <person name="de Haan M."/>
            <person name="Maarse A.C."/>
            <person name="Alcaraz J.-P."/>
            <person name="Cottet A."/>
            <person name="Casacuberta E."/>
            <person name="Monfort A."/>
            <person name="Argiriou A."/>
            <person name="Flores M."/>
            <person name="Liguori R."/>
            <person name="Vitale D."/>
            <person name="Mannhaupt G."/>
            <person name="Haase D."/>
            <person name="Schoof H."/>
            <person name="Rudd S."/>
            <person name="Zaccaria P."/>
            <person name="Mewes H.-W."/>
            <person name="Mayer K.F.X."/>
            <person name="Kaul S."/>
            <person name="Town C.D."/>
            <person name="Koo H.L."/>
            <person name="Tallon L.J."/>
            <person name="Jenkins J."/>
            <person name="Rooney T."/>
            <person name="Rizzo M."/>
            <person name="Walts A."/>
            <person name="Utterback T."/>
            <person name="Fujii C.Y."/>
            <person name="Shea T.P."/>
            <person name="Creasy T.H."/>
            <person name="Haas B."/>
            <person name="Maiti R."/>
            <person name="Wu D."/>
            <person name="Peterson J."/>
            <person name="Van Aken S."/>
            <person name="Pai G."/>
            <person name="Militscher J."/>
            <person name="Sellers P."/>
            <person name="Gill J.E."/>
            <person name="Feldblyum T.V."/>
            <person name="Preuss D."/>
            <person name="Lin X."/>
            <person name="Nierman W.C."/>
            <person name="Salzberg S.L."/>
            <person name="White O."/>
            <person name="Venter J.C."/>
            <person name="Fraser C.M."/>
            <person name="Kaneko T."/>
            <person name="Nakamura Y."/>
            <person name="Sato S."/>
            <person name="Kato T."/>
            <person name="Asamizu E."/>
            <person name="Sasamoto S."/>
            <person name="Kimura T."/>
            <person name="Idesawa K."/>
            <person name="Kawashima K."/>
            <person name="Kishida Y."/>
            <person name="Kiyokawa C."/>
            <person name="Kohara M."/>
            <person name="Matsumoto M."/>
            <person name="Matsuno A."/>
            <person name="Muraki A."/>
            <person name="Nakayama S."/>
            <person name="Nakazaki N."/>
            <person name="Shinpo S."/>
            <person name="Takeuchi C."/>
            <person name="Wada T."/>
            <person name="Watanabe A."/>
            <person name="Yamada M."/>
            <person name="Yasuda M."/>
            <person name="Tabata S."/>
        </authorList>
    </citation>
    <scope>NUCLEOTIDE SEQUENCE [LARGE SCALE GENOMIC DNA]</scope>
    <source>
        <strain>cv. Columbia</strain>
    </source>
</reference>
<reference key="2">
    <citation type="journal article" date="2017" name="Plant J.">
        <title>Araport11: a complete reannotation of the Arabidopsis thaliana reference genome.</title>
        <authorList>
            <person name="Cheng C.Y."/>
            <person name="Krishnakumar V."/>
            <person name="Chan A.P."/>
            <person name="Thibaud-Nissen F."/>
            <person name="Schobel S."/>
            <person name="Town C.D."/>
        </authorList>
    </citation>
    <scope>GENOME REANNOTATION</scope>
    <source>
        <strain>cv. Columbia</strain>
    </source>
</reference>
<reference key="3">
    <citation type="journal article" date="2005" name="J. Biol. Chem.">
        <title>Cullins 3a and 3b assemble with members of the broad complex/tramtrack/bric-a-brac (BTB) protein family to form essential ubiquitin-protein ligases (E3s) in Arabidopsis.</title>
        <authorList>
            <person name="Gingerich D.J."/>
            <person name="Gagne J.M."/>
            <person name="Salter D.W."/>
            <person name="Hellmann H."/>
            <person name="Estelle M."/>
            <person name="Ma L."/>
            <person name="Vierstra R.D."/>
        </authorList>
    </citation>
    <scope>DOMAIN BTB</scope>
</reference>
<dbReference type="EMBL" id="AC012562">
    <property type="protein sequence ID" value="AAG51353.1"/>
    <property type="molecule type" value="Genomic_DNA"/>
</dbReference>
<dbReference type="EMBL" id="CP002686">
    <property type="protein sequence ID" value="AEE74660.1"/>
    <property type="molecule type" value="Genomic_DNA"/>
</dbReference>
<dbReference type="RefSeq" id="NP_187478.1">
    <property type="nucleotide sequence ID" value="NM_111700.2"/>
</dbReference>
<dbReference type="SMR" id="Q9C9Z0"/>
<dbReference type="PaxDb" id="3702-AT3G08660.1"/>
<dbReference type="EnsemblPlants" id="AT3G08660.1">
    <property type="protein sequence ID" value="AT3G08660.1"/>
    <property type="gene ID" value="AT3G08660"/>
</dbReference>
<dbReference type="GeneID" id="820013"/>
<dbReference type="Gramene" id="AT3G08660.1">
    <property type="protein sequence ID" value="AT3G08660.1"/>
    <property type="gene ID" value="AT3G08660"/>
</dbReference>
<dbReference type="KEGG" id="ath:AT3G08660"/>
<dbReference type="Araport" id="AT3G08660"/>
<dbReference type="TAIR" id="AT3G08660"/>
<dbReference type="eggNOG" id="ENOG502QRW3">
    <property type="taxonomic scope" value="Eukaryota"/>
</dbReference>
<dbReference type="HOGENOM" id="CLU_005994_6_0_1"/>
<dbReference type="InParanoid" id="Q9C9Z0"/>
<dbReference type="OMA" id="HRILTCF"/>
<dbReference type="PhylomeDB" id="Q9C9Z0"/>
<dbReference type="UniPathway" id="UPA00143"/>
<dbReference type="PRO" id="PR:Q9C9Z0"/>
<dbReference type="Proteomes" id="UP000006548">
    <property type="component" value="Chromosome 3"/>
</dbReference>
<dbReference type="ExpressionAtlas" id="Q9C9Z0">
    <property type="expression patterns" value="baseline and differential"/>
</dbReference>
<dbReference type="GO" id="GO:0016567">
    <property type="term" value="P:protein ubiquitination"/>
    <property type="evidence" value="ECO:0007669"/>
    <property type="project" value="UniProtKB-UniPathway"/>
</dbReference>
<dbReference type="Gene3D" id="3.30.710.10">
    <property type="entry name" value="Potassium Channel Kv1.1, Chain A"/>
    <property type="match status" value="1"/>
</dbReference>
<dbReference type="InterPro" id="IPR000210">
    <property type="entry name" value="BTB/POZ_dom"/>
</dbReference>
<dbReference type="InterPro" id="IPR043454">
    <property type="entry name" value="NPH3/RPT2-like"/>
</dbReference>
<dbReference type="InterPro" id="IPR027356">
    <property type="entry name" value="NPH3_dom"/>
</dbReference>
<dbReference type="InterPro" id="IPR011333">
    <property type="entry name" value="SKP1/BTB/POZ_sf"/>
</dbReference>
<dbReference type="PANTHER" id="PTHR32370">
    <property type="entry name" value="OS12G0117600 PROTEIN"/>
    <property type="match status" value="1"/>
</dbReference>
<dbReference type="Pfam" id="PF00651">
    <property type="entry name" value="BTB"/>
    <property type="match status" value="1"/>
</dbReference>
<dbReference type="Pfam" id="PF03000">
    <property type="entry name" value="NPH3"/>
    <property type="match status" value="1"/>
</dbReference>
<dbReference type="SMART" id="SM00225">
    <property type="entry name" value="BTB"/>
    <property type="match status" value="1"/>
</dbReference>
<dbReference type="SUPFAM" id="SSF54695">
    <property type="entry name" value="POZ domain"/>
    <property type="match status" value="1"/>
</dbReference>
<dbReference type="PROSITE" id="PS50097">
    <property type="entry name" value="BTB"/>
    <property type="match status" value="1"/>
</dbReference>
<dbReference type="PROSITE" id="PS51649">
    <property type="entry name" value="NPH3"/>
    <property type="match status" value="1"/>
</dbReference>
<comment type="function">
    <text evidence="1">May act as a substrate-specific adapter of an E3 ubiquitin-protein ligase complex (CUL3-RBX1-BTB) which mediates the ubiquitination and subsequent proteasomal degradation of target proteins.</text>
</comment>
<comment type="pathway">
    <text>Protein modification; protein ubiquitination.</text>
</comment>
<comment type="domain">
    <text evidence="6">The BTB/POZ domain mediates the interaction with some component of ubiquitin ligase complexes.</text>
</comment>
<comment type="similarity">
    <text evidence="4">Belongs to the NPH3 family.</text>
</comment>
<organism>
    <name type="scientific">Arabidopsis thaliana</name>
    <name type="common">Mouse-ear cress</name>
    <dbReference type="NCBI Taxonomy" id="3702"/>
    <lineage>
        <taxon>Eukaryota</taxon>
        <taxon>Viridiplantae</taxon>
        <taxon>Streptophyta</taxon>
        <taxon>Embryophyta</taxon>
        <taxon>Tracheophyta</taxon>
        <taxon>Spermatophyta</taxon>
        <taxon>Magnoliopsida</taxon>
        <taxon>eudicotyledons</taxon>
        <taxon>Gunneridae</taxon>
        <taxon>Pentapetalae</taxon>
        <taxon>rosids</taxon>
        <taxon>malvids</taxon>
        <taxon>Brassicales</taxon>
        <taxon>Brassicaceae</taxon>
        <taxon>Camelineae</taxon>
        <taxon>Arabidopsis</taxon>
    </lineage>
</organism>